<comment type="function">
    <text evidence="1">Histone chaperone that specifically mediates the genome-wide removal of histone H2A.Z/H2AZ1 from the nucleosome: removes H2A.Z/H2AZ1 from its normal sites of deposition, especially from enhancer and insulator regions. Not involved in deposition of H2A.Z/H2AZ1 in the nucleosome. May stabilize the evicted H2A.Z/H2AZ1-H2B dimer, thus shifting the equilibrium towards dissociation and the off-chromatin state. Inhibits activity of protein phosphatase 2A (PP2A). Does not inhibit protein phosphatase 1. May play a role in cerebellar development and synaptogenesis (By similarity).</text>
</comment>
<comment type="subunit">
    <text evidence="1">Component of a SWR1-like complex. Interacts with H2A.Z/H2AZ1 (By similarity).</text>
</comment>
<comment type="subcellular location">
    <subcellularLocation>
        <location evidence="1">Cytoplasm</location>
    </subcellularLocation>
    <subcellularLocation>
        <location evidence="1">Nucleus</location>
    </subcellularLocation>
</comment>
<comment type="domain">
    <text evidence="1">The H2A.Z-interacting domain (ZID) mediates a direct interaction with H2A.Z/H2AZ1.</text>
</comment>
<comment type="similarity">
    <text evidence="3">Belongs to the ANP32 family.</text>
</comment>
<keyword id="KW-0143">Chaperone</keyword>
<keyword id="KW-0156">Chromatin regulator</keyword>
<keyword id="KW-0963">Cytoplasm</keyword>
<keyword id="KW-0433">Leucine-rich repeat</keyword>
<keyword id="KW-0539">Nucleus</keyword>
<keyword id="KW-1185">Reference proteome</keyword>
<keyword id="KW-0677">Repeat</keyword>
<proteinExistence type="evidence at transcript level"/>
<sequence length="256" mass="28926">MEMKKRINLELRNQAPEEVTELVLDNCKSSNGEIEGLNDSFKELEFLSMANVQLTSLAKLPTLSKLRKLELSDNIISGGLEVLAERCPNLTYLNLSGNKIKDLGTVEALQNLKNLKSLDLFNCEITNLEDYRDSIFDLLQQITYLDGFDQEDNEAPDSEDDDDEGDEDDNDEDEDEAGPPGEYEEEDDEDDGGSDLGEGEEEEEVGLSYLMKEEIQDEDDDDDYVEEGGDEEEEAEGIRGEKRKRDPEDEGEEEDD</sequence>
<evidence type="ECO:0000250" key="1"/>
<evidence type="ECO:0000256" key="2">
    <source>
        <dbReference type="SAM" id="MobiDB-lite"/>
    </source>
</evidence>
<evidence type="ECO:0000305" key="3"/>
<gene>
    <name type="primary">ANP32E</name>
    <name type="ORF">RCJMB04_1l3</name>
</gene>
<reference key="1">
    <citation type="journal article" date="2005" name="Genome Biol.">
        <title>Full-length cDNAs from chicken bursal lymphocytes to facilitate gene function analysis.</title>
        <authorList>
            <person name="Caldwell R.B."/>
            <person name="Kierzek A.M."/>
            <person name="Arakawa H."/>
            <person name="Bezzubov Y."/>
            <person name="Zaim J."/>
            <person name="Fiedler P."/>
            <person name="Kutter S."/>
            <person name="Blagodatski A."/>
            <person name="Kostovska D."/>
            <person name="Koter M."/>
            <person name="Plachy J."/>
            <person name="Carninci P."/>
            <person name="Hayashizaki Y."/>
            <person name="Buerstedde J.-M."/>
        </authorList>
    </citation>
    <scope>NUCLEOTIDE SEQUENCE [LARGE SCALE MRNA]</scope>
    <source>
        <strain>CB</strain>
        <tissue>Bursa of Fabricius</tissue>
    </source>
</reference>
<reference key="2">
    <citation type="journal article" date="2005" name="Cerebellum">
        <title>The Anp32 family of proteins containing leucine-rich repeats.</title>
        <authorList>
            <person name="Matilla A."/>
            <person name="Radrizzani M."/>
        </authorList>
    </citation>
    <scope>GENE FAMILY</scope>
    <scope>NOMENCLATURE</scope>
</reference>
<organism>
    <name type="scientific">Gallus gallus</name>
    <name type="common">Chicken</name>
    <dbReference type="NCBI Taxonomy" id="9031"/>
    <lineage>
        <taxon>Eukaryota</taxon>
        <taxon>Metazoa</taxon>
        <taxon>Chordata</taxon>
        <taxon>Craniata</taxon>
        <taxon>Vertebrata</taxon>
        <taxon>Euteleostomi</taxon>
        <taxon>Archelosauria</taxon>
        <taxon>Archosauria</taxon>
        <taxon>Dinosauria</taxon>
        <taxon>Saurischia</taxon>
        <taxon>Theropoda</taxon>
        <taxon>Coelurosauria</taxon>
        <taxon>Aves</taxon>
        <taxon>Neognathae</taxon>
        <taxon>Galloanserae</taxon>
        <taxon>Galliformes</taxon>
        <taxon>Phasianidae</taxon>
        <taxon>Phasianinae</taxon>
        <taxon>Gallus</taxon>
    </lineage>
</organism>
<accession>Q5F4A3</accession>
<dbReference type="EMBL" id="AJ851397">
    <property type="protein sequence ID" value="CAH65031.1"/>
    <property type="molecule type" value="mRNA"/>
</dbReference>
<dbReference type="RefSeq" id="NP_001006564.2">
    <property type="nucleotide sequence ID" value="NM_001006564.3"/>
</dbReference>
<dbReference type="SMR" id="Q5F4A3"/>
<dbReference type="FunCoup" id="Q5F4A3">
    <property type="interactions" value="2712"/>
</dbReference>
<dbReference type="STRING" id="9031.ENSGALP00000074198"/>
<dbReference type="PaxDb" id="9031-ENSGALP00000021907"/>
<dbReference type="GeneID" id="426109"/>
<dbReference type="KEGG" id="gga:426109"/>
<dbReference type="CTD" id="81611"/>
<dbReference type="VEuPathDB" id="HostDB:geneid_426109"/>
<dbReference type="eggNOG" id="KOG2739">
    <property type="taxonomic scope" value="Eukaryota"/>
</dbReference>
<dbReference type="InParanoid" id="Q5F4A3"/>
<dbReference type="OrthoDB" id="2160613at2759"/>
<dbReference type="PRO" id="PR:Q5F4A3"/>
<dbReference type="Proteomes" id="UP000000539">
    <property type="component" value="Chromosome 25"/>
</dbReference>
<dbReference type="Bgee" id="ENSGALG00000039891">
    <property type="expression patterns" value="Expressed in spleen and 13 other cell types or tissues"/>
</dbReference>
<dbReference type="GO" id="GO:0005737">
    <property type="term" value="C:cytoplasm"/>
    <property type="evidence" value="ECO:0000250"/>
    <property type="project" value="AgBase"/>
</dbReference>
<dbReference type="GO" id="GO:0031410">
    <property type="term" value="C:cytoplasmic vesicle"/>
    <property type="evidence" value="ECO:0000250"/>
    <property type="project" value="AgBase"/>
</dbReference>
<dbReference type="GO" id="GO:0005634">
    <property type="term" value="C:nucleus"/>
    <property type="evidence" value="ECO:0000250"/>
    <property type="project" value="AgBase"/>
</dbReference>
<dbReference type="GO" id="GO:0000812">
    <property type="term" value="C:Swr1 complex"/>
    <property type="evidence" value="ECO:0000250"/>
    <property type="project" value="UniProtKB"/>
</dbReference>
<dbReference type="GO" id="GO:0042393">
    <property type="term" value="F:histone binding"/>
    <property type="evidence" value="ECO:0000250"/>
    <property type="project" value="UniProtKB"/>
</dbReference>
<dbReference type="GO" id="GO:0140713">
    <property type="term" value="F:histone chaperone activity"/>
    <property type="evidence" value="ECO:0000250"/>
    <property type="project" value="UniProtKB"/>
</dbReference>
<dbReference type="GO" id="GO:0019212">
    <property type="term" value="F:phosphatase inhibitor activity"/>
    <property type="evidence" value="ECO:0000250"/>
    <property type="project" value="AgBase"/>
</dbReference>
<dbReference type="GO" id="GO:0006325">
    <property type="term" value="P:chromatin organization"/>
    <property type="evidence" value="ECO:0007669"/>
    <property type="project" value="UniProtKB-KW"/>
</dbReference>
<dbReference type="GO" id="GO:0042981">
    <property type="term" value="P:regulation of apoptotic process"/>
    <property type="evidence" value="ECO:0000318"/>
    <property type="project" value="GO_Central"/>
</dbReference>
<dbReference type="FunFam" id="3.80.10.10:FF:000003">
    <property type="entry name" value="Acidic leucine-rich nuclear phosphoprotein 32 family member A"/>
    <property type="match status" value="1"/>
</dbReference>
<dbReference type="Gene3D" id="3.80.10.10">
    <property type="entry name" value="Ribonuclease Inhibitor"/>
    <property type="match status" value="1"/>
</dbReference>
<dbReference type="InterPro" id="IPR045081">
    <property type="entry name" value="AN32"/>
</dbReference>
<dbReference type="InterPro" id="IPR001611">
    <property type="entry name" value="Leu-rich_rpt"/>
</dbReference>
<dbReference type="InterPro" id="IPR032675">
    <property type="entry name" value="LRR_dom_sf"/>
</dbReference>
<dbReference type="PANTHER" id="PTHR11375">
    <property type="entry name" value="ACIDIC LEUCINE-RICH NUCLEAR PHOSPHOPROTEIN 32"/>
    <property type="match status" value="1"/>
</dbReference>
<dbReference type="PANTHER" id="PTHR11375:SF5">
    <property type="entry name" value="ACIDIC LEUCINE-RICH NUCLEAR PHOSPHOPROTEIN 32 FAMILY MEMBER E"/>
    <property type="match status" value="1"/>
</dbReference>
<dbReference type="Pfam" id="PF14580">
    <property type="entry name" value="LRR_9"/>
    <property type="match status" value="1"/>
</dbReference>
<dbReference type="SUPFAM" id="SSF52058">
    <property type="entry name" value="L domain-like"/>
    <property type="match status" value="1"/>
</dbReference>
<dbReference type="PROSITE" id="PS51450">
    <property type="entry name" value="LRR"/>
    <property type="match status" value="4"/>
</dbReference>
<name>AN32E_CHICK</name>
<protein>
    <recommendedName>
        <fullName>Acidic leucine-rich nuclear phosphoprotein 32 family member E</fullName>
    </recommendedName>
</protein>
<feature type="chain" id="PRO_0000280065" description="Acidic leucine-rich nuclear phosphoprotein 32 family member E">
    <location>
        <begin position="1"/>
        <end position="256"/>
    </location>
</feature>
<feature type="repeat" description="LRR 1">
    <location>
        <begin position="43"/>
        <end position="64"/>
    </location>
</feature>
<feature type="repeat" description="LRR 2">
    <location>
        <begin position="65"/>
        <end position="87"/>
    </location>
</feature>
<feature type="repeat" description="LRR 3">
    <location>
        <begin position="89"/>
        <end position="110"/>
    </location>
</feature>
<feature type="domain" description="LRRCT">
    <location>
        <begin position="123"/>
        <end position="161"/>
    </location>
</feature>
<feature type="region of interest" description="Disordered" evidence="2">
    <location>
        <begin position="147"/>
        <end position="256"/>
    </location>
</feature>
<feature type="region of interest" description="ZID domain" evidence="1">
    <location>
        <begin position="204"/>
        <end position="256"/>
    </location>
</feature>
<feature type="compositionally biased region" description="Acidic residues" evidence="2">
    <location>
        <begin position="148"/>
        <end position="205"/>
    </location>
</feature>
<feature type="compositionally biased region" description="Acidic residues" evidence="2">
    <location>
        <begin position="215"/>
        <end position="235"/>
    </location>
</feature>
<feature type="compositionally biased region" description="Basic and acidic residues" evidence="2">
    <location>
        <begin position="236"/>
        <end position="247"/>
    </location>
</feature>